<protein>
    <recommendedName>
        <fullName>Profilin-3</fullName>
    </recommendedName>
    <alternativeName>
        <fullName>Pollen allergen Hev b 8.0201</fullName>
    </alternativeName>
    <allergenName>Hev b 8.0201</allergenName>
</protein>
<feature type="initiator methionine" description="Removed" evidence="1">
    <location>
        <position position="1"/>
    </location>
</feature>
<feature type="chain" id="PRO_0000199635" description="Profilin-3">
    <location>
        <begin position="2"/>
        <end position="131"/>
    </location>
</feature>
<sequence>MSWQTYVDEHLMCDIDGHHLTAAAIIGHDGSVWAQSSSFPQFKPEEVAAIMKDFDEPGSLAPTGLHLGGTKYMVIQGEPGAVIRGKKGSGGITVKKTGQALIIGIYDEPLTPGQCNMIVERLGDYLLEQGM</sequence>
<reference key="1">
    <citation type="submission" date="1999-01" db="EMBL/GenBank/DDBJ databases">
        <title>Characterization of new isoforms of the latex allergen, Hev b 8.</title>
        <authorList>
            <person name="Beezhold D.H."/>
            <person name="Hickey V.L."/>
            <person name="Kostyal D.A."/>
            <person name="Sussman G.L."/>
        </authorList>
    </citation>
    <scope>NUCLEOTIDE SEQUENCE [MRNA]</scope>
</reference>
<organism>
    <name type="scientific">Hevea brasiliensis</name>
    <name type="common">Para rubber tree</name>
    <name type="synonym">Siphonia brasiliensis</name>
    <dbReference type="NCBI Taxonomy" id="3981"/>
    <lineage>
        <taxon>Eukaryota</taxon>
        <taxon>Viridiplantae</taxon>
        <taxon>Streptophyta</taxon>
        <taxon>Embryophyta</taxon>
        <taxon>Tracheophyta</taxon>
        <taxon>Spermatophyta</taxon>
        <taxon>Magnoliopsida</taxon>
        <taxon>eudicotyledons</taxon>
        <taxon>Gunneridae</taxon>
        <taxon>Pentapetalae</taxon>
        <taxon>rosids</taxon>
        <taxon>fabids</taxon>
        <taxon>Malpighiales</taxon>
        <taxon>Euphorbiaceae</taxon>
        <taxon>Crotonoideae</taxon>
        <taxon>Micrandreae</taxon>
        <taxon>Hevea</taxon>
    </lineage>
</organism>
<comment type="function">
    <text evidence="1">Binds to actin and affects the structure of the cytoskeleton. At high concentrations, profilin prevents the polymerization of actin, whereas it enhances it at low concentrations. By binding to PIP2, it inhibits the formation of IP3 and DG (By similarity).</text>
</comment>
<comment type="subunit">
    <text>Occurs in many kinds of cells as a complex with monomeric actin in a 1:1 ratio.</text>
</comment>
<comment type="subcellular location">
    <subcellularLocation>
        <location evidence="1">Cytoplasm</location>
        <location evidence="1">Cytoskeleton</location>
    </subcellularLocation>
</comment>
<comment type="allergen">
    <text>Causes an allergic reaction in human. Involved in latex allergic reactions.</text>
</comment>
<comment type="similarity">
    <text evidence="2">Belongs to the profilin family.</text>
</comment>
<keyword id="KW-0009">Actin-binding</keyword>
<keyword id="KW-0020">Allergen</keyword>
<keyword id="KW-0963">Cytoplasm</keyword>
<keyword id="KW-0206">Cytoskeleton</keyword>
<proteinExistence type="evidence at protein level"/>
<accession>Q9M7N0</accession>
<dbReference type="EMBL" id="AF119365">
    <property type="protein sequence ID" value="AAF34341.1"/>
    <property type="molecule type" value="mRNA"/>
</dbReference>
<dbReference type="SMR" id="Q9M7N0"/>
<dbReference type="Allergome" id="397">
    <property type="allergen name" value="Hev b 8"/>
</dbReference>
<dbReference type="Allergome" id="400">
    <property type="allergen name" value="Hev b 8.0201"/>
</dbReference>
<dbReference type="GO" id="GO:0005938">
    <property type="term" value="C:cell cortex"/>
    <property type="evidence" value="ECO:0007669"/>
    <property type="project" value="TreeGrafter"/>
</dbReference>
<dbReference type="GO" id="GO:0005856">
    <property type="term" value="C:cytoskeleton"/>
    <property type="evidence" value="ECO:0007669"/>
    <property type="project" value="UniProtKB-SubCell"/>
</dbReference>
<dbReference type="GO" id="GO:0003785">
    <property type="term" value="F:actin monomer binding"/>
    <property type="evidence" value="ECO:0007669"/>
    <property type="project" value="TreeGrafter"/>
</dbReference>
<dbReference type="CDD" id="cd00148">
    <property type="entry name" value="PROF"/>
    <property type="match status" value="1"/>
</dbReference>
<dbReference type="FunFam" id="3.30.450.30:FF:000001">
    <property type="entry name" value="Profilin"/>
    <property type="match status" value="1"/>
</dbReference>
<dbReference type="Gene3D" id="3.30.450.30">
    <property type="entry name" value="Dynein light chain 2a, cytoplasmic"/>
    <property type="match status" value="1"/>
</dbReference>
<dbReference type="InterPro" id="IPR048278">
    <property type="entry name" value="PFN"/>
</dbReference>
<dbReference type="InterPro" id="IPR005455">
    <property type="entry name" value="PFN_euk"/>
</dbReference>
<dbReference type="InterPro" id="IPR036140">
    <property type="entry name" value="PFN_sf"/>
</dbReference>
<dbReference type="InterPro" id="IPR027310">
    <property type="entry name" value="Profilin_CS"/>
</dbReference>
<dbReference type="PANTHER" id="PTHR11604">
    <property type="entry name" value="PROFILIN"/>
    <property type="match status" value="1"/>
</dbReference>
<dbReference type="PANTHER" id="PTHR11604:SF35">
    <property type="entry name" value="PROFILIN-3"/>
    <property type="match status" value="1"/>
</dbReference>
<dbReference type="Pfam" id="PF00235">
    <property type="entry name" value="Profilin"/>
    <property type="match status" value="1"/>
</dbReference>
<dbReference type="PRINTS" id="PR00392">
    <property type="entry name" value="PROFILIN"/>
</dbReference>
<dbReference type="PRINTS" id="PR01640">
    <property type="entry name" value="PROFILINPLNT"/>
</dbReference>
<dbReference type="SMART" id="SM00392">
    <property type="entry name" value="PROF"/>
    <property type="match status" value="1"/>
</dbReference>
<dbReference type="SUPFAM" id="SSF55770">
    <property type="entry name" value="Profilin (actin-binding protein)"/>
    <property type="match status" value="1"/>
</dbReference>
<dbReference type="PROSITE" id="PS00414">
    <property type="entry name" value="PROFILIN"/>
    <property type="match status" value="1"/>
</dbReference>
<name>PROF3_HEVBR</name>
<evidence type="ECO:0000250" key="1"/>
<evidence type="ECO:0000305" key="2"/>